<gene>
    <name type="ORF">CPUR_05428</name>
</gene>
<protein>
    <recommendedName>
        <fullName evidence="1">Scytalone dehydratase-like protein CPUR_05428</fullName>
        <ecNumber evidence="1">4.2.1.-</ecNumber>
    </recommendedName>
    <alternativeName>
        <fullName evidence="6">Ergochrome gene cluster protein CPUR_05428</fullName>
    </alternativeName>
</protein>
<feature type="chain" id="PRO_0000443976" description="Scytalone dehydratase-like protein CPUR_05428">
    <location>
        <begin position="1"/>
        <end position="158"/>
    </location>
</feature>
<feature type="active site" evidence="2">
    <location>
        <position position="79"/>
    </location>
</feature>
<feature type="active site" evidence="2">
    <location>
        <position position="104"/>
    </location>
</feature>
<feature type="binding site" evidence="2">
    <location>
        <position position="24"/>
    </location>
    <ligand>
        <name>substrate</name>
    </ligand>
</feature>
<feature type="binding site" evidence="2">
    <location>
        <position position="44"/>
    </location>
    <ligand>
        <name>substrate</name>
    </ligand>
</feature>
<accession>M1W851</accession>
<organism>
    <name type="scientific">Claviceps purpurea (strain 20.1)</name>
    <name type="common">Ergot fungus</name>
    <name type="synonym">Sphacelia segetum</name>
    <dbReference type="NCBI Taxonomy" id="1111077"/>
    <lineage>
        <taxon>Eukaryota</taxon>
        <taxon>Fungi</taxon>
        <taxon>Dikarya</taxon>
        <taxon>Ascomycota</taxon>
        <taxon>Pezizomycotina</taxon>
        <taxon>Sordariomycetes</taxon>
        <taxon>Hypocreomycetidae</taxon>
        <taxon>Hypocreales</taxon>
        <taxon>Clavicipitaceae</taxon>
        <taxon>Claviceps</taxon>
    </lineage>
</organism>
<dbReference type="EC" id="4.2.1.-" evidence="1"/>
<dbReference type="EMBL" id="CAGA01000032">
    <property type="protein sequence ID" value="CCE31575.1"/>
    <property type="molecule type" value="Genomic_DNA"/>
</dbReference>
<dbReference type="SMR" id="M1W851"/>
<dbReference type="STRING" id="1111077.M1W851"/>
<dbReference type="VEuPathDB" id="FungiDB:CPUR_05428"/>
<dbReference type="eggNOG" id="ENOG502SNND">
    <property type="taxonomic scope" value="Eukaryota"/>
</dbReference>
<dbReference type="HOGENOM" id="CLU_101889_1_0_1"/>
<dbReference type="OrthoDB" id="5281072at2759"/>
<dbReference type="PhylomeDB" id="M1W851"/>
<dbReference type="Proteomes" id="UP000016801">
    <property type="component" value="Unassembled WGS sequence"/>
</dbReference>
<dbReference type="GO" id="GO:0030411">
    <property type="term" value="F:scytalone dehydratase activity"/>
    <property type="evidence" value="ECO:0007669"/>
    <property type="project" value="InterPro"/>
</dbReference>
<dbReference type="GO" id="GO:0006582">
    <property type="term" value="P:melanin metabolic process"/>
    <property type="evidence" value="ECO:0007669"/>
    <property type="project" value="InterPro"/>
</dbReference>
<dbReference type="Gene3D" id="3.10.450.50">
    <property type="match status" value="1"/>
</dbReference>
<dbReference type="InterPro" id="IPR032710">
    <property type="entry name" value="NTF2-like_dom_sf"/>
</dbReference>
<dbReference type="InterPro" id="IPR004235">
    <property type="entry name" value="Scytalone_dehydratase"/>
</dbReference>
<dbReference type="InterPro" id="IPR049884">
    <property type="entry name" value="Scytalone_dh"/>
</dbReference>
<dbReference type="Pfam" id="PF02982">
    <property type="entry name" value="Scytalone_dh"/>
    <property type="match status" value="1"/>
</dbReference>
<dbReference type="PIRSF" id="PIRSF024851">
    <property type="entry name" value="SCD1"/>
    <property type="match status" value="1"/>
</dbReference>
<dbReference type="SUPFAM" id="SSF54427">
    <property type="entry name" value="NTF2-like"/>
    <property type="match status" value="1"/>
</dbReference>
<evidence type="ECO:0000250" key="1">
    <source>
        <dbReference type="UniProtKB" id="C8VQ71"/>
    </source>
</evidence>
<evidence type="ECO:0000250" key="2">
    <source>
        <dbReference type="UniProtKB" id="P56221"/>
    </source>
</evidence>
<evidence type="ECO:0000250" key="3">
    <source>
        <dbReference type="UniProtKB" id="Q4W944"/>
    </source>
</evidence>
<evidence type="ECO:0000269" key="4">
    <source>
    </source>
</evidence>
<evidence type="ECO:0000269" key="5">
    <source>
    </source>
</evidence>
<evidence type="ECO:0000303" key="6">
    <source>
    </source>
</evidence>
<evidence type="ECO:0000305" key="7"/>
<evidence type="ECO:0000305" key="8">
    <source>
    </source>
</evidence>
<proteinExistence type="evidence at transcript level"/>
<name>PIG6_CLAP2</name>
<keyword id="KW-0456">Lyase</keyword>
<keyword id="KW-1185">Reference proteome</keyword>
<sequence>MSKTPSYEDATACQAALFEWAESYDLKDWNRLSKCIAPTLQIDYRAVFGQFWEAMPADEFVGMISSPGFLGNPLIKTQHFVGMTRWTQTSEDSVTGRHQMRVAHQKYADAQMKEVVLKGHGHGGATTWFRKVDGDWKFAGIEPEIRWAEFDLDKIFAE</sequence>
<comment type="function">
    <text evidence="1 3 4 5">Scytalone dehydratase-like protein; part of the ergochrome gene cluster responsible for the typical purple-black color of the ergot sclerotia (PubMed:28955461). The ergochrome gene cluster produces several ergot pigments including the yellow ergochrome secalonic acid and its derivatives, as well as the red anthraquinones endocrocin and clavorubin (PubMed:28955461). The pathway begins with the synthesis of atrochrysone thioester by the polyketide synthase (PKS) CPUR_05437 (By similarity). The atrochrysone carboxyl ACP thioesterase CPUR_05436 then breaks the thioester bond and releases the atrochrysone carboxylic acid from CPUR_05437 (By similarity). The atrochrysone carboxylic acid is then converted to atrochrysone which is further transformed into emodin anthrone (By similarity). The next step is performed by the anthrone oxygenase CPUR_05434 that catalyzes the oxidation of emodinanthrone to emodin (By similarity). Emodin is further modified to yield monodictyphenone via several steps involving CPUR_05427, CPUR_05428, CPUR_05429 and CPUR_05430 (By similarity). The short chain dehydrogenase/reductase CPUR_05418 then catalyzes the C-5 ketoreduction to give the xanthone skeleton of the monomeric units (PubMed:32105084). Ergochromes formation requires further dimerization steps of different xanthone units, probably catalyzed by the cytochrome P450 monooxygenase CPUR_05419 (PubMed:28955461). CPUR_05425, CPUR_05426 and CPUR_05431 are unique to Claviceps, thus it is likely that they are involved in further modification of xanthone units or in their dimerization (PubMed:28955461). The yellow ergochromes and the red anthraquinone pigments endocrocin and clavorubin are products from the same PKS derived precursors and the latter are likely shunt products in the pathway of xanthone biosynthesis (PubMed:28955461). It is proposed that atrochrysone carboxylic acid released from the PKS CPUR_05437 can also be converted to endocrocin anthrone which is further oxidized into endocrocin by CPUR_05435 (By similarity). Endocrocin could be then modified to clavorubin, possibly by CPUR_05423 and CPUR_05431 (PubMed:28955461). Clavorubin is the principal anthraquinone metabolite produced by the cluster with a much higher yield compared to endocrocin (PubMed:28955461).</text>
</comment>
<comment type="pathway">
    <text evidence="8">Pigment biosynthesis.</text>
</comment>
<comment type="induction">
    <text evidence="4">Expression correlates with the formation of the sclerotia and thus the pigment production and is directly regulated by the cluster-specific activator CPUR_05433 (PubMed:28955461).</text>
</comment>
<comment type="similarity">
    <text evidence="7">Belongs to the scytalone dehydratase family.</text>
</comment>
<reference key="1">
    <citation type="journal article" date="2013" name="PLoS Genet.">
        <title>Plant-symbiotic fungi as chemical engineers: Multi-genome analysis of the Clavicipitaceae reveals dynamics of alkaloid loci.</title>
        <authorList>
            <person name="Schardl C.L."/>
            <person name="Young C.A."/>
            <person name="Hesse U."/>
            <person name="Amyotte S.G."/>
            <person name="Andreeva K."/>
            <person name="Calie P.J."/>
            <person name="Fleetwood D.J."/>
            <person name="Haws D.C."/>
            <person name="Moore N."/>
            <person name="Oeser B."/>
            <person name="Panaccione D.G."/>
            <person name="Schweri K.K."/>
            <person name="Voisey C.R."/>
            <person name="Farman M.L."/>
            <person name="Jaromczyk J.W."/>
            <person name="Roe B.A."/>
            <person name="O'Sullivan D.M."/>
            <person name="Scott B."/>
            <person name="Tudzynski P."/>
            <person name="An Z."/>
            <person name="Arnaoudova E.G."/>
            <person name="Bullock C.T."/>
            <person name="Charlton N.D."/>
            <person name="Chen L."/>
            <person name="Cox M."/>
            <person name="Dinkins R.D."/>
            <person name="Florea S."/>
            <person name="Glenn A.E."/>
            <person name="Gordon A."/>
            <person name="Gueldener U."/>
            <person name="Harris D.R."/>
            <person name="Hollin W."/>
            <person name="Jaromczyk J."/>
            <person name="Johnson R.D."/>
            <person name="Khan A.K."/>
            <person name="Leistner E."/>
            <person name="Leuchtmann A."/>
            <person name="Li C."/>
            <person name="Liu J."/>
            <person name="Liu J."/>
            <person name="Liu M."/>
            <person name="Mace W."/>
            <person name="Machado C."/>
            <person name="Nagabhyru P."/>
            <person name="Pan J."/>
            <person name="Schmid J."/>
            <person name="Sugawara K."/>
            <person name="Steiner U."/>
            <person name="Takach J.E."/>
            <person name="Tanaka E."/>
            <person name="Webb J.S."/>
            <person name="Wilson E.V."/>
            <person name="Wiseman J.L."/>
            <person name="Yoshida R."/>
            <person name="Zeng Z."/>
        </authorList>
    </citation>
    <scope>NUCLEOTIDE SEQUENCE [LARGE SCALE GENOMIC DNA]</scope>
    <source>
        <strain>20.1</strain>
    </source>
</reference>
<reference key="2">
    <citation type="journal article" date="2016" name="Fungal Biol. Biotechnol.">
        <title>Identification and characterization of the ergochrome gene cluster in the plant pathogenic fungus Claviceps purpurea.</title>
        <authorList>
            <person name="Neubauer L."/>
            <person name="Dopstadt J."/>
            <person name="Humpf H.U."/>
            <person name="Tudzynski P."/>
        </authorList>
    </citation>
    <scope>FUNCTION</scope>
    <scope>INDUCTION</scope>
</reference>
<reference key="3">
    <citation type="journal article" date="2020" name="Org. Lett.">
        <title>Unraveling the fungal strategy for tetrahydroxanthone biosynthesis and diversification.</title>
        <authorList>
            <person name="Wei X."/>
            <person name="Matsuda Y."/>
        </authorList>
    </citation>
    <scope>FUNCTION</scope>
</reference>